<evidence type="ECO:0000250" key="1">
    <source>
        <dbReference type="UniProtKB" id="Q9LIS2"/>
    </source>
</evidence>
<evidence type="ECO:0000255" key="2"/>
<evidence type="ECO:0000255" key="3">
    <source>
        <dbReference type="PROSITE-ProRule" id="PRU00176"/>
    </source>
</evidence>
<evidence type="ECO:0000256" key="4">
    <source>
        <dbReference type="SAM" id="MobiDB-lite"/>
    </source>
</evidence>
<evidence type="ECO:0000269" key="5">
    <source>
    </source>
</evidence>
<evidence type="ECO:0000269" key="6">
    <source>
    </source>
</evidence>
<evidence type="ECO:0000269" key="7">
    <source>
    </source>
</evidence>
<evidence type="ECO:0000303" key="8">
    <source>
    </source>
</evidence>
<evidence type="ECO:0000303" key="9">
    <source>
    </source>
</evidence>
<evidence type="ECO:0000303" key="10">
    <source>
    </source>
</evidence>
<evidence type="ECO:0000303" key="11">
    <source>
    </source>
</evidence>
<evidence type="ECO:0000305" key="12"/>
<evidence type="ECO:0000312" key="13">
    <source>
        <dbReference type="Araport" id="AT1G74230"/>
    </source>
</evidence>
<evidence type="ECO:0000312" key="14">
    <source>
        <dbReference type="EMBL" id="AAG52402.1"/>
    </source>
</evidence>
<comment type="function">
    <text evidence="1 5 6">Possibly has a role in RNA transcription or processing during stress (By similarity). Binds RNAs and DNAs sequence with a preference to single-stranded nucleic acids. Displays strong affinity to poly(U) sequence (PubMed:11972043). Involved in C-to-U editing of mitochondrial RNA. Functions as a major mitochondrial editing factor. Controls 44 percent of the mitochondrial editing sites (PubMed:26578708).</text>
</comment>
<comment type="subunit">
    <text evidence="6 7">Homodimer (PubMed:26578708). Interacts with MORF8/RIP1 AND RBG3/ORRM3 (PubMed:26578708). Binds to RBG2/ORRM5 (PubMed:28549172).</text>
</comment>
<comment type="subcellular location">
    <subcellularLocation>
        <location evidence="5 6">Mitochondrion</location>
    </subcellularLocation>
</comment>
<comment type="disruption phenotype">
    <text evidence="6">Reduced growth rate and delayed flowering.</text>
</comment>
<comment type="similarity">
    <text evidence="12">Belongs to the GR-RBP family.</text>
</comment>
<keyword id="KW-0496">Mitochondrion</keyword>
<keyword id="KW-0507">mRNA processing</keyword>
<keyword id="KW-1185">Reference proteome</keyword>
<keyword id="KW-0694">RNA-binding</keyword>
<keyword id="KW-0809">Transit peptide</keyword>
<proteinExistence type="evidence at protein level"/>
<organism>
    <name type="scientific">Arabidopsis thaliana</name>
    <name type="common">Mouse-ear cress</name>
    <dbReference type="NCBI Taxonomy" id="3702"/>
    <lineage>
        <taxon>Eukaryota</taxon>
        <taxon>Viridiplantae</taxon>
        <taxon>Streptophyta</taxon>
        <taxon>Embryophyta</taxon>
        <taxon>Tracheophyta</taxon>
        <taxon>Spermatophyta</taxon>
        <taxon>Magnoliopsida</taxon>
        <taxon>eudicotyledons</taxon>
        <taxon>Gunneridae</taxon>
        <taxon>Pentapetalae</taxon>
        <taxon>rosids</taxon>
        <taxon>malvids</taxon>
        <taxon>Brassicales</taxon>
        <taxon>Brassicaceae</taxon>
        <taxon>Camelineae</taxon>
        <taxon>Arabidopsis</taxon>
    </lineage>
</organism>
<reference key="1">
    <citation type="journal article" date="2000" name="Nature">
        <title>Sequence and analysis of chromosome 1 of the plant Arabidopsis thaliana.</title>
        <authorList>
            <person name="Theologis A."/>
            <person name="Ecker J.R."/>
            <person name="Palm C.J."/>
            <person name="Federspiel N.A."/>
            <person name="Kaul S."/>
            <person name="White O."/>
            <person name="Alonso J."/>
            <person name="Altafi H."/>
            <person name="Araujo R."/>
            <person name="Bowman C.L."/>
            <person name="Brooks S.Y."/>
            <person name="Buehler E."/>
            <person name="Chan A."/>
            <person name="Chao Q."/>
            <person name="Chen H."/>
            <person name="Cheuk R.F."/>
            <person name="Chin C.W."/>
            <person name="Chung M.K."/>
            <person name="Conn L."/>
            <person name="Conway A.B."/>
            <person name="Conway A.R."/>
            <person name="Creasy T.H."/>
            <person name="Dewar K."/>
            <person name="Dunn P."/>
            <person name="Etgu P."/>
            <person name="Feldblyum T.V."/>
            <person name="Feng J.-D."/>
            <person name="Fong B."/>
            <person name="Fujii C.Y."/>
            <person name="Gill J.E."/>
            <person name="Goldsmith A.D."/>
            <person name="Haas B."/>
            <person name="Hansen N.F."/>
            <person name="Hughes B."/>
            <person name="Huizar L."/>
            <person name="Hunter J.L."/>
            <person name="Jenkins J."/>
            <person name="Johnson-Hopson C."/>
            <person name="Khan S."/>
            <person name="Khaykin E."/>
            <person name="Kim C.J."/>
            <person name="Koo H.L."/>
            <person name="Kremenetskaia I."/>
            <person name="Kurtz D.B."/>
            <person name="Kwan A."/>
            <person name="Lam B."/>
            <person name="Langin-Hooper S."/>
            <person name="Lee A."/>
            <person name="Lee J.M."/>
            <person name="Lenz C.A."/>
            <person name="Li J.H."/>
            <person name="Li Y.-P."/>
            <person name="Lin X."/>
            <person name="Liu S.X."/>
            <person name="Liu Z.A."/>
            <person name="Luros J.S."/>
            <person name="Maiti R."/>
            <person name="Marziali A."/>
            <person name="Militscher J."/>
            <person name="Miranda M."/>
            <person name="Nguyen M."/>
            <person name="Nierman W.C."/>
            <person name="Osborne B.I."/>
            <person name="Pai G."/>
            <person name="Peterson J."/>
            <person name="Pham P.K."/>
            <person name="Rizzo M."/>
            <person name="Rooney T."/>
            <person name="Rowley D."/>
            <person name="Sakano H."/>
            <person name="Salzberg S.L."/>
            <person name="Schwartz J.R."/>
            <person name="Shinn P."/>
            <person name="Southwick A.M."/>
            <person name="Sun H."/>
            <person name="Tallon L.J."/>
            <person name="Tambunga G."/>
            <person name="Toriumi M.J."/>
            <person name="Town C.D."/>
            <person name="Utterback T."/>
            <person name="Van Aken S."/>
            <person name="Vaysberg M."/>
            <person name="Vysotskaia V.S."/>
            <person name="Walker M."/>
            <person name="Wu D."/>
            <person name="Yu G."/>
            <person name="Fraser C.M."/>
            <person name="Venter J.C."/>
            <person name="Davis R.W."/>
        </authorList>
    </citation>
    <scope>NUCLEOTIDE SEQUENCE [LARGE SCALE GENOMIC DNA]</scope>
    <source>
        <strain>cv. Columbia</strain>
    </source>
</reference>
<reference key="2">
    <citation type="journal article" date="2017" name="Plant J.">
        <title>Araport11: a complete reannotation of the Arabidopsis thaliana reference genome.</title>
        <authorList>
            <person name="Cheng C.Y."/>
            <person name="Krishnakumar V."/>
            <person name="Chan A.P."/>
            <person name="Thibaud-Nissen F."/>
            <person name="Schobel S."/>
            <person name="Town C.D."/>
        </authorList>
    </citation>
    <scope>GENOME REANNOTATION</scope>
    <source>
        <strain>cv. Columbia</strain>
    </source>
</reference>
<reference key="3">
    <citation type="journal article" date="2003" name="Science">
        <title>Empirical analysis of transcriptional activity in the Arabidopsis genome.</title>
        <authorList>
            <person name="Yamada K."/>
            <person name="Lim J."/>
            <person name="Dale J.M."/>
            <person name="Chen H."/>
            <person name="Shinn P."/>
            <person name="Palm C.J."/>
            <person name="Southwick A.M."/>
            <person name="Wu H.C."/>
            <person name="Kim C.J."/>
            <person name="Nguyen M."/>
            <person name="Pham P.K."/>
            <person name="Cheuk R.F."/>
            <person name="Karlin-Newmann G."/>
            <person name="Liu S.X."/>
            <person name="Lam B."/>
            <person name="Sakano H."/>
            <person name="Wu T."/>
            <person name="Yu G."/>
            <person name="Miranda M."/>
            <person name="Quach H.L."/>
            <person name="Tripp M."/>
            <person name="Chang C.H."/>
            <person name="Lee J.M."/>
            <person name="Toriumi M.J."/>
            <person name="Chan M.M."/>
            <person name="Tang C.C."/>
            <person name="Onodera C.S."/>
            <person name="Deng J.M."/>
            <person name="Akiyama K."/>
            <person name="Ansari Y."/>
            <person name="Arakawa T."/>
            <person name="Banh J."/>
            <person name="Banno F."/>
            <person name="Bowser L."/>
            <person name="Brooks S.Y."/>
            <person name="Carninci P."/>
            <person name="Chao Q."/>
            <person name="Choy N."/>
            <person name="Enju A."/>
            <person name="Goldsmith A.D."/>
            <person name="Gurjal M."/>
            <person name="Hansen N.F."/>
            <person name="Hayashizaki Y."/>
            <person name="Johnson-Hopson C."/>
            <person name="Hsuan V.W."/>
            <person name="Iida K."/>
            <person name="Karnes M."/>
            <person name="Khan S."/>
            <person name="Koesema E."/>
            <person name="Ishida J."/>
            <person name="Jiang P.X."/>
            <person name="Jones T."/>
            <person name="Kawai J."/>
            <person name="Kamiya A."/>
            <person name="Meyers C."/>
            <person name="Nakajima M."/>
            <person name="Narusaka M."/>
            <person name="Seki M."/>
            <person name="Sakurai T."/>
            <person name="Satou M."/>
            <person name="Tamse R."/>
            <person name="Vaysberg M."/>
            <person name="Wallender E.K."/>
            <person name="Wong C."/>
            <person name="Yamamura Y."/>
            <person name="Yuan S."/>
            <person name="Shinozaki K."/>
            <person name="Davis R.W."/>
            <person name="Theologis A."/>
            <person name="Ecker J.R."/>
        </authorList>
    </citation>
    <scope>NUCLEOTIDE SEQUENCE [LARGE SCALE MRNA]</scope>
    <source>
        <strain>cv. Columbia</strain>
    </source>
</reference>
<reference key="4">
    <citation type="journal article" date="2002" name="Nucleic Acids Res.">
        <title>Genome analysis: RNA recognition motif (RRM) and K homology (KH) domain RNA-binding proteins from the flowering plant Arabidopsis thaliana.</title>
        <authorList>
            <person name="Lorkovic Z.J."/>
            <person name="Barta A."/>
        </authorList>
    </citation>
    <scope>GENE FAMILY</scope>
</reference>
<reference key="5">
    <citation type="journal article" date="2002" name="Proc. Natl. Acad. Sci. U.S.A.">
        <title>A family of RRM-type RNA-binding proteins specific to plant mitochondria.</title>
        <authorList>
            <person name="Vermel M."/>
            <person name="Guermann B."/>
            <person name="Delage L."/>
            <person name="Grienenberger J.M."/>
            <person name="Marechal-Drouard L."/>
            <person name="Gualberto J.M."/>
        </authorList>
    </citation>
    <scope>SUBCELLULAR LOCATION</scope>
    <scope>FUNCTION</scope>
</reference>
<reference key="6">
    <citation type="journal article" date="2010" name="Plant Signal. Behav.">
        <title>Functional diversity of the plant glycine-rich proteins superfamily.</title>
        <authorList>
            <person name="Mangeon A."/>
            <person name="Junqueira R.M."/>
            <person name="Sachetto-Martins G."/>
        </authorList>
    </citation>
    <scope>NOMENCLATURE</scope>
</reference>
<reference key="7">
    <citation type="journal article" date="2016" name="Plant Physiol.">
        <title>RNA recognition motif-containing protein ORRM4 broadly affects mitochondrial RNA editing and impacts plant development and flowering.</title>
        <authorList>
            <person name="Shi X."/>
            <person name="Germain A."/>
            <person name="Hanson M.R."/>
            <person name="Bentolila S."/>
        </authorList>
    </citation>
    <scope>FUNCTION</scope>
    <scope>HOMODIMERIZATION</scope>
    <scope>INTERACTION WITH MORF8/RIP1 AND RBG3/ORRM3</scope>
    <scope>SUBCELLULAR LOCATION</scope>
    <scope>DISRUPTION PHENOTYPE</scope>
</reference>
<reference key="8">
    <citation type="journal article" date="2017" name="J. Exp. Bot.">
        <title>ORRM5, an RNA recognition motif-containing protein, has a unique effect on mitochondrial RNA editing.</title>
        <authorList>
            <person name="Shi X."/>
            <person name="Castandet B."/>
            <person name="Germain A."/>
            <person name="Hanson M.R."/>
            <person name="Bentolila S."/>
        </authorList>
    </citation>
    <scope>INTERACTION WITH RBG2/ORRM5</scope>
    <source>
        <strain>cv. Columbia</strain>
    </source>
</reference>
<name>RBG5_ARATH</name>
<protein>
    <recommendedName>
        <fullName evidence="8">Glycine-rich RNA-binding protein 5, mitochondrial</fullName>
        <shortName evidence="8">AtGR-RBP5</shortName>
    </recommendedName>
    <alternativeName>
        <fullName evidence="10">AtRBG5</fullName>
    </alternativeName>
    <alternativeName>
        <fullName evidence="9">Mitochondrial RNA-binding protein 2b</fullName>
        <shortName evidence="9">At-mRBP2b</shortName>
    </alternativeName>
    <alternativeName>
        <fullName evidence="11">Organelle RRM domain-containing protein 4</fullName>
    </alternativeName>
</protein>
<sequence>MAFLSKVGRLFSQTSSHVTASSSMLQSIRCMSSSKIFVGGISYSTDEFGLREAFSKYGEVVDAKIIVDRETGRSRGFAFVTFTSTEEASNAMQLDGQDLHGRRIRVNYATERGSGFGGRGFGGPGGGYGASDGGYGAPAGGYGGGAGGYGGNSSYSGNAGGGGGYGGNSSYGGNAGGYGGNPPYSGNAVGGGGGYGSNFGGGGGYGVAGGVGGSENFAQGSSTNAGFDDKFESNQPLGNDTDHQTESGLGGDEQFGGSDNQFGDAENGNTENGPVGFDQTDDGDVAKRA</sequence>
<accession>Q9C909</accession>
<feature type="transit peptide" description="Mitochondrion" evidence="2">
    <location>
        <begin position="1"/>
        <end position="31"/>
    </location>
</feature>
<feature type="chain" id="PRO_0000421676" description="Glycine-rich RNA-binding protein 5, mitochondrial">
    <location>
        <begin position="32"/>
        <end position="289"/>
    </location>
</feature>
<feature type="domain" description="RRM" evidence="3">
    <location>
        <begin position="34"/>
        <end position="111"/>
    </location>
</feature>
<feature type="region of interest" description="Disordered" evidence="4">
    <location>
        <begin position="219"/>
        <end position="289"/>
    </location>
</feature>
<feature type="compositionally biased region" description="Polar residues" evidence="4">
    <location>
        <begin position="257"/>
        <end position="272"/>
    </location>
</feature>
<dbReference type="EMBL" id="AC020579">
    <property type="protein sequence ID" value="AAG52402.1"/>
    <property type="molecule type" value="Genomic_DNA"/>
</dbReference>
<dbReference type="EMBL" id="CP002684">
    <property type="protein sequence ID" value="AEE35568.1"/>
    <property type="molecule type" value="Genomic_DNA"/>
</dbReference>
<dbReference type="EMBL" id="BT002037">
    <property type="protein sequence ID" value="AAN72048.1"/>
    <property type="molecule type" value="mRNA"/>
</dbReference>
<dbReference type="EMBL" id="BT006315">
    <property type="protein sequence ID" value="AAP13423.1"/>
    <property type="molecule type" value="mRNA"/>
</dbReference>
<dbReference type="PIR" id="F96770">
    <property type="entry name" value="F96770"/>
</dbReference>
<dbReference type="RefSeq" id="NP_177563.1">
    <property type="nucleotide sequence ID" value="NM_106083.5"/>
</dbReference>
<dbReference type="SMR" id="Q9C909"/>
<dbReference type="FunCoup" id="Q9C909">
    <property type="interactions" value="81"/>
</dbReference>
<dbReference type="IntAct" id="Q9C909">
    <property type="interactions" value="1"/>
</dbReference>
<dbReference type="STRING" id="3702.Q9C909"/>
<dbReference type="PaxDb" id="3702-AT1G74230.1"/>
<dbReference type="ProteomicsDB" id="236508"/>
<dbReference type="EnsemblPlants" id="AT1G74230.1">
    <property type="protein sequence ID" value="AT1G74230.1"/>
    <property type="gene ID" value="AT1G74230"/>
</dbReference>
<dbReference type="GeneID" id="843763"/>
<dbReference type="Gramene" id="AT1G74230.1">
    <property type="protein sequence ID" value="AT1G74230.1"/>
    <property type="gene ID" value="AT1G74230"/>
</dbReference>
<dbReference type="KEGG" id="ath:AT1G74230"/>
<dbReference type="Araport" id="AT1G74230"/>
<dbReference type="TAIR" id="AT1G74230">
    <property type="gene designation" value="RBGA2"/>
</dbReference>
<dbReference type="eggNOG" id="KOG0118">
    <property type="taxonomic scope" value="Eukaryota"/>
</dbReference>
<dbReference type="HOGENOM" id="CLU_012062_13_1_1"/>
<dbReference type="InParanoid" id="Q9C909"/>
<dbReference type="OMA" id="QNRYHDM"/>
<dbReference type="PRO" id="PR:Q9C909"/>
<dbReference type="Proteomes" id="UP000006548">
    <property type="component" value="Chromosome 1"/>
</dbReference>
<dbReference type="ExpressionAtlas" id="Q9C909">
    <property type="expression patterns" value="baseline and differential"/>
</dbReference>
<dbReference type="GO" id="GO:0005829">
    <property type="term" value="C:cytosol"/>
    <property type="evidence" value="ECO:0007005"/>
    <property type="project" value="TAIR"/>
</dbReference>
<dbReference type="GO" id="GO:0005739">
    <property type="term" value="C:mitochondrion"/>
    <property type="evidence" value="ECO:0000314"/>
    <property type="project" value="UniProtKB"/>
</dbReference>
<dbReference type="GO" id="GO:0005524">
    <property type="term" value="F:ATP binding"/>
    <property type="evidence" value="ECO:0007005"/>
    <property type="project" value="TAIR"/>
</dbReference>
<dbReference type="GO" id="GO:0005507">
    <property type="term" value="F:copper ion binding"/>
    <property type="evidence" value="ECO:0007005"/>
    <property type="project" value="TAIR"/>
</dbReference>
<dbReference type="GO" id="GO:0003729">
    <property type="term" value="F:mRNA binding"/>
    <property type="evidence" value="ECO:0000314"/>
    <property type="project" value="TAIR"/>
</dbReference>
<dbReference type="GO" id="GO:0042803">
    <property type="term" value="F:protein homodimerization activity"/>
    <property type="evidence" value="ECO:0000353"/>
    <property type="project" value="UniProtKB"/>
</dbReference>
<dbReference type="GO" id="GO:0003723">
    <property type="term" value="F:RNA binding"/>
    <property type="evidence" value="ECO:0000314"/>
    <property type="project" value="UniProtKB"/>
</dbReference>
<dbReference type="GO" id="GO:0003697">
    <property type="term" value="F:single-stranded DNA binding"/>
    <property type="evidence" value="ECO:0000314"/>
    <property type="project" value="TAIR"/>
</dbReference>
<dbReference type="GO" id="GO:0016554">
    <property type="term" value="P:cytidine to uridine editing"/>
    <property type="evidence" value="ECO:0000315"/>
    <property type="project" value="UniProtKB"/>
</dbReference>
<dbReference type="GO" id="GO:0080156">
    <property type="term" value="P:mitochondrial mRNA modification"/>
    <property type="evidence" value="ECO:0000315"/>
    <property type="project" value="TAIR"/>
</dbReference>
<dbReference type="GO" id="GO:0006397">
    <property type="term" value="P:mRNA processing"/>
    <property type="evidence" value="ECO:0007669"/>
    <property type="project" value="UniProtKB-KW"/>
</dbReference>
<dbReference type="CDD" id="cd21608">
    <property type="entry name" value="RRM2_NsCP33_like"/>
    <property type="match status" value="1"/>
</dbReference>
<dbReference type="Gene3D" id="3.30.70.330">
    <property type="match status" value="1"/>
</dbReference>
<dbReference type="InterPro" id="IPR012677">
    <property type="entry name" value="Nucleotide-bd_a/b_plait_sf"/>
</dbReference>
<dbReference type="InterPro" id="IPR035979">
    <property type="entry name" value="RBD_domain_sf"/>
</dbReference>
<dbReference type="InterPro" id="IPR048289">
    <property type="entry name" value="RRM2_NsCP33-like"/>
</dbReference>
<dbReference type="InterPro" id="IPR000504">
    <property type="entry name" value="RRM_dom"/>
</dbReference>
<dbReference type="InterPro" id="IPR052462">
    <property type="entry name" value="SLIRP/GR-RBP-like"/>
</dbReference>
<dbReference type="PANTHER" id="PTHR48027">
    <property type="entry name" value="HETEROGENEOUS NUCLEAR RIBONUCLEOPROTEIN 87F-RELATED"/>
    <property type="match status" value="1"/>
</dbReference>
<dbReference type="Pfam" id="PF00076">
    <property type="entry name" value="RRM_1"/>
    <property type="match status" value="1"/>
</dbReference>
<dbReference type="PRINTS" id="PR01228">
    <property type="entry name" value="EGGSHELL"/>
</dbReference>
<dbReference type="SMART" id="SM00360">
    <property type="entry name" value="RRM"/>
    <property type="match status" value="1"/>
</dbReference>
<dbReference type="SUPFAM" id="SSF54928">
    <property type="entry name" value="RNA-binding domain, RBD"/>
    <property type="match status" value="1"/>
</dbReference>
<dbReference type="PROSITE" id="PS50102">
    <property type="entry name" value="RRM"/>
    <property type="match status" value="1"/>
</dbReference>
<gene>
    <name evidence="10" type="primary">RBG5</name>
    <name evidence="8" type="synonym">GR-RBP5</name>
    <name evidence="9" type="synonym">MRBP2B</name>
    <name evidence="11" type="synonym">ORRM4</name>
    <name evidence="13" type="ordered locus">At1g74230</name>
    <name evidence="14" type="ORF">F1O17.10</name>
</gene>